<gene>
    <name evidence="10" type="primary">TPI</name>
</gene>
<name>TPIS_PLAFA</name>
<comment type="function">
    <text evidence="6 7 8">Catalyzes the interconversion of glyceraldehyde 3-phosphate and dihydroxyacetone phosphate in the glycolytic and gluconeogenic pathways.</text>
</comment>
<comment type="catalytic activity">
    <reaction evidence="6 7 8">
        <text>D-glyceraldehyde 3-phosphate = dihydroxyacetone phosphate</text>
        <dbReference type="Rhea" id="RHEA:18585"/>
        <dbReference type="ChEBI" id="CHEBI:57642"/>
        <dbReference type="ChEBI" id="CHEBI:59776"/>
        <dbReference type="EC" id="5.3.1.1"/>
    </reaction>
    <physiologicalReaction direction="left-to-right" evidence="8">
        <dbReference type="Rhea" id="RHEA:18586"/>
    </physiologicalReaction>
</comment>
<comment type="biophysicochemical properties">
    <kinetics>
        <KM evidence="7">0.35 mM for D-glyceraldehyde-3-phosphate (at 25 degrees Celsius)</KM>
        <KM evidence="6">0.39 mM for D-glyceraldehyde-3-phosphate (at pH 7.6)</KM>
        <text evidence="6 7">kcat is 4300 sec(-1) with D-glyceraldehyde-3-phosphate as substrate (at 25 degrees Celsius) (PubMed:26762569). kcat is 4233 sec(-1) with D-glyceraldehyde-3-phosphate as substrate (at pH 7.6) (PubMed:19622869).</text>
    </kinetics>
</comment>
<comment type="pathway">
    <text evidence="12">Carbohydrate biosynthesis; gluconeogenesis.</text>
</comment>
<comment type="pathway">
    <text evidence="12">Carbohydrate degradation; glycolysis; D-glyceraldehyde 3-phosphate from glycerone phosphate: step 1/1.</text>
</comment>
<comment type="subunit">
    <text evidence="2 3 4 5">Homodimer.</text>
</comment>
<comment type="interaction">
    <interactant intactId="EBI-7086711">
        <id>Q07412</id>
    </interactant>
    <interactant intactId="EBI-7086711">
        <id>Q07412</id>
        <label>TPI</label>
    </interactant>
    <organismsDiffer>false</organismsDiffer>
    <experiments>5</experiments>
</comment>
<comment type="similarity">
    <text evidence="11">Belongs to the triosephosphate isomerase family.</text>
</comment>
<feature type="chain" id="PRO_0000090138" description="Triosephosphate isomerase">
    <location>
        <begin position="1"/>
        <end position="248"/>
    </location>
</feature>
<feature type="active site" description="Electrophile" evidence="1">
    <location>
        <position position="95"/>
    </location>
</feature>
<feature type="active site" description="Proton acceptor" evidence="1">
    <location>
        <position position="165"/>
    </location>
</feature>
<feature type="binding site" evidence="3 4 6 16 18 28">
    <location>
        <position position="10"/>
    </location>
    <ligand>
        <name>D-glyceraldehyde 3-phosphate</name>
        <dbReference type="ChEBI" id="CHEBI:59776"/>
    </ligand>
</feature>
<feature type="binding site" evidence="2 5 6 14 15 20 28">
    <location>
        <position position="12"/>
    </location>
    <ligand>
        <name>D-glyceraldehyde 3-phosphate</name>
        <dbReference type="ChEBI" id="CHEBI:59776"/>
    </ligand>
</feature>
<feature type="binding site" evidence="2 6 14 28">
    <location>
        <position position="171"/>
    </location>
    <ligand>
        <name>D-glyceraldehyde 3-phosphate</name>
        <dbReference type="ChEBI" id="CHEBI:59776"/>
    </ligand>
</feature>
<feature type="binding site" evidence="3 4 5 6 16 18 20 28">
    <location>
        <position position="230"/>
    </location>
    <ligand>
        <name>D-glyceraldehyde 3-phosphate</name>
        <dbReference type="ChEBI" id="CHEBI:59776"/>
    </ligand>
</feature>
<feature type="binding site" evidence="2 3 4 5 6 13 14 16 17 18 20 28">
    <location>
        <begin position="232"/>
        <end position="233"/>
    </location>
    <ligand>
        <name>D-glyceraldehyde 3-phosphate</name>
        <dbReference type="ChEBI" id="CHEBI:59776"/>
    </ligand>
</feature>
<feature type="mutagenesis site" description="3-fold decrease in substrate affinity; when associated with S-96." evidence="7">
    <original>S</original>
    <variation>A</variation>
    <location>
        <position position="73"/>
    </location>
</feature>
<feature type="mutagenesis site" description="2-fold decrease in substrate affinity." evidence="7">
    <original>F</original>
    <variation>A</variation>
    <location>
        <position position="96"/>
    </location>
</feature>
<feature type="mutagenesis site" description="6.7-fold decrease in substrate affinity." evidence="6">
    <original>F</original>
    <variation>H</variation>
    <location>
        <position position="96"/>
    </location>
</feature>
<feature type="mutagenesis site" description="5.5-fold decrease in substrate affinity. 3-fold decrease in substrate affinity; when associated with A-73 or V-167." evidence="6 7">
    <original>F</original>
    <variation>S</variation>
    <location>
        <position position="96"/>
    </location>
</feature>
<feature type="mutagenesis site" description="3-fold decrease in substrate affinity." evidence="6">
    <original>F</original>
    <variation>W</variation>
    <location>
        <position position="96"/>
    </location>
</feature>
<feature type="mutagenesis site" description="5-fold decrease in substrate affinity." evidence="7">
    <original>F</original>
    <variation>Y</variation>
    <location>
        <position position="96"/>
    </location>
</feature>
<feature type="mutagenesis site" description="3-fold decrease in substrate affinity; when associated with S-96." evidence="7">
    <original>L</original>
    <variation>V</variation>
    <location>
        <position position="167"/>
    </location>
</feature>
<feature type="strand" evidence="33">
    <location>
        <begin position="5"/>
        <end position="10"/>
    </location>
</feature>
<feature type="helix" evidence="33">
    <location>
        <begin position="17"/>
        <end position="28"/>
    </location>
</feature>
<feature type="turn" evidence="33">
    <location>
        <begin position="34"/>
        <end position="36"/>
    </location>
</feature>
<feature type="strand" evidence="33">
    <location>
        <begin position="37"/>
        <end position="42"/>
    </location>
</feature>
<feature type="helix" evidence="33">
    <location>
        <begin position="45"/>
        <end position="47"/>
    </location>
</feature>
<feature type="helix" evidence="33">
    <location>
        <begin position="48"/>
        <end position="54"/>
    </location>
</feature>
<feature type="strand" evidence="33">
    <location>
        <begin position="59"/>
        <end position="64"/>
    </location>
</feature>
<feature type="strand" evidence="33">
    <location>
        <begin position="71"/>
        <end position="73"/>
    </location>
</feature>
<feature type="helix" evidence="33">
    <location>
        <begin position="80"/>
        <end position="85"/>
    </location>
</feature>
<feature type="strand" evidence="33">
    <location>
        <begin position="90"/>
        <end position="93"/>
    </location>
</feature>
<feature type="helix" evidence="33">
    <location>
        <begin position="96"/>
        <end position="101"/>
    </location>
</feature>
<feature type="helix" evidence="33">
    <location>
        <begin position="106"/>
        <end position="118"/>
    </location>
</feature>
<feature type="strand" evidence="33">
    <location>
        <begin position="122"/>
        <end position="127"/>
    </location>
</feature>
<feature type="helix" evidence="33">
    <location>
        <begin position="131"/>
        <end position="135"/>
    </location>
</feature>
<feature type="helix" evidence="33">
    <location>
        <begin position="139"/>
        <end position="148"/>
    </location>
</feature>
<feature type="helix" evidence="33">
    <location>
        <begin position="151"/>
        <end position="153"/>
    </location>
</feature>
<feature type="strand" evidence="33">
    <location>
        <begin position="159"/>
        <end position="164"/>
    </location>
</feature>
<feature type="helix" evidence="33">
    <location>
        <begin position="167"/>
        <end position="169"/>
    </location>
</feature>
<feature type="strand" evidence="33">
    <location>
        <begin position="170"/>
        <end position="173"/>
    </location>
</feature>
<feature type="helix" evidence="33">
    <location>
        <begin position="178"/>
        <end position="195"/>
    </location>
</feature>
<feature type="helix" evidence="33">
    <location>
        <begin position="198"/>
        <end position="203"/>
    </location>
</feature>
<feature type="strand" evidence="33">
    <location>
        <begin position="204"/>
        <end position="208"/>
    </location>
</feature>
<feature type="turn" evidence="33">
    <location>
        <begin position="214"/>
        <end position="216"/>
    </location>
</feature>
<feature type="helix" evidence="33">
    <location>
        <begin position="217"/>
        <end position="221"/>
    </location>
</feature>
<feature type="strand" evidence="33">
    <location>
        <begin position="228"/>
        <end position="231"/>
    </location>
</feature>
<feature type="helix" evidence="33">
    <location>
        <begin position="233"/>
        <end position="236"/>
    </location>
</feature>
<feature type="helix" evidence="33">
    <location>
        <begin position="240"/>
        <end position="246"/>
    </location>
</feature>
<organism>
    <name type="scientific">Plasmodium falciparum</name>
    <dbReference type="NCBI Taxonomy" id="5833"/>
    <lineage>
        <taxon>Eukaryota</taxon>
        <taxon>Sar</taxon>
        <taxon>Alveolata</taxon>
        <taxon>Apicomplexa</taxon>
        <taxon>Aconoidasida</taxon>
        <taxon>Haemosporida</taxon>
        <taxon>Plasmodiidae</taxon>
        <taxon>Plasmodium</taxon>
        <taxon>Plasmodium (Laverania)</taxon>
    </lineage>
</organism>
<reference key="1">
    <citation type="journal article" date="1993" name="Mol. Biochem. Parasitol.">
        <title>Cloning of the triosephosphate isomerase gene of Plasmodium falciparum and expression in Escherichia coli.</title>
        <authorList>
            <person name="Ranie J."/>
            <person name="Kumar V.P."/>
            <person name="Balaram H."/>
        </authorList>
    </citation>
    <scope>NUCLEOTIDE SEQUENCE [MRNA]</scope>
    <scope>FUNCTION</scope>
    <scope>CATALYTIC ACTIVITY</scope>
    <scope>PATHWAY</scope>
    <source>
        <strain>Palo Alto</strain>
    </source>
</reference>
<reference evidence="22" key="2">
    <citation type="journal article" date="1997" name="Structure">
        <title>Triosephosphate isomerase from Plasmodium falciparum: the crystal structure provides insights into antimalarial drug design.</title>
        <authorList>
            <person name="Velanker S.S."/>
            <person name="Ray S.S."/>
            <person name="Gokhale R.S."/>
            <person name="Suma S."/>
            <person name="Balaram H."/>
            <person name="Balaram P."/>
            <person name="Murthy M.R.N."/>
        </authorList>
    </citation>
    <scope>X-RAY CRYSTALLOGRAPHY (2.2 ANGSTROMS)</scope>
    <scope>HOMODIMERIZATION</scope>
</reference>
<reference evidence="16 17" key="3">
    <citation type="journal article" date="2002" name="Acta Crystallogr. D">
        <title>Structures of Plasmodium falciparum triosephosphate isomerase complexed to substrate analogues: observation of the catalytic loop in the open conformation in the ligand-bound state.</title>
        <authorList>
            <person name="Parthasarathy S."/>
            <person name="Balaram H."/>
            <person name="Balaram P."/>
            <person name="Murthy M.R.N."/>
        </authorList>
    </citation>
    <scope>X-RAY CRYSTALLOGRAPHY (2.4 ANGSTROMS) IN COMPLEX WITH SUBSTRATE ANALOGS</scope>
    <scope>HOMODIMERIZATION</scope>
</reference>
<reference evidence="14 15" key="4">
    <citation type="journal article" date="2002" name="Biochemistry">
        <title>Structure of the Plasmodium falciparum triosephosphate isomerase-phosphoglycolate complex in two crystal forms: characterization of catalytic loop open and closed conformations in the ligand-bound state.</title>
        <authorList>
            <person name="Parthasarathy S."/>
            <person name="Ravindra G."/>
            <person name="Balaram H."/>
            <person name="Balaram P."/>
            <person name="Murthy M.R.N."/>
        </authorList>
    </citation>
    <scope>X-RAY CRYSTALLOGRAPHY (1.9 ANGSTROMS) IN COMPLEX WITH SUBSTRATE ANALOG</scope>
    <scope>HOMODIMERIZATION</scope>
</reference>
<reference evidence="18" key="5">
    <citation type="journal article" date="2003" name="J. Biol. Chem.">
        <title>Structure of Plasmodium falciparum triose-phosphate isomerase-2-phosphoglycerate complex at 1.1-A resolution.</title>
        <authorList>
            <person name="Parthasarathy S."/>
            <person name="Eaazhisai K."/>
            <person name="Balaram H."/>
            <person name="Balaram P."/>
            <person name="Murthy M.R.N."/>
        </authorList>
    </citation>
    <scope>X-RAY CRYSTALLOGRAPHY (1.1 ANGSTROMS) IN COMPLEX WITH SUBSTRATE ANALOG</scope>
</reference>
<reference evidence="19 20 21" key="6">
    <citation type="journal article" date="2004" name="J. Mol. Biol.">
        <title>Structures of unliganded and inhibitor complexes of W168F, a Loop6 hinge mutant of Plasmodium falciparum triosephosphate isomerase: observation of an intermediate position of loop6.</title>
        <authorList>
            <person name="Eaazhisai K."/>
            <person name="Balaram H."/>
            <person name="Balaram P."/>
            <person name="Murthy M.R.N."/>
        </authorList>
    </citation>
    <scope>X-RAY CRYSTALLOGRAPHY (2.8 ANGSTROMS) IN COMPLEX WITH SUBSTRATE ANALOG</scope>
</reference>
<reference evidence="23 24 25 26 27 28" key="7">
    <citation type="journal article" date="2009" name="Acta Crystallogr. D">
        <title>Biochemical and structural characterization of residue 96 mutants of Plasmodium falciparum triosephosphate isomerase: active-site loop conformation, hydration and identification of a dimer-interface ligand-binding site.</title>
        <authorList>
            <person name="Gayathri P."/>
            <person name="Banerjee M."/>
            <person name="Vijayalakshmi A."/>
            <person name="Balaram H."/>
            <person name="Balaram P."/>
            <person name="Murthy M.R."/>
        </authorList>
    </citation>
    <scope>X-RAY CRYSTALLOGRAPHY (1.40 ANGSTROMS) OF WILD TYPE AND MUTANTS SER-96; HIS-96 AND TRP-96 IN COMPLEX WITH SUBSTRATE ANALOG</scope>
    <scope>FUNCTION</scope>
    <scope>CATALYTIC ACTIVITY</scope>
    <scope>BIOPHYSICOCHEMICAL PROPERTIES</scope>
    <scope>MUTAGENESIS OF PHE-96</scope>
</reference>
<reference evidence="29 30 31 32" key="8">
    <citation type="journal article" date="2016" name="ChemBioChem">
        <title>Connecting Active-Site Loop Conformations and Catalysis in Triosephosphate Isomerase: Insights from a Rare Variation at Residue 96 in the Plasmodial Enzyme.</title>
        <authorList>
            <person name="Pareek V."/>
            <person name="Samanta M."/>
            <person name="Joshi N.V."/>
            <person name="Balaram H."/>
            <person name="Murthy M.R."/>
            <person name="Balaram P."/>
        </authorList>
    </citation>
    <scope>X-RAY CRYSTALLOGRAPHY (1.85 ANGSTROMS) OF MUTANTS SER-96/VAL167; TYR-96; SER096/ALA-73 AND ALA-96</scope>
    <scope>FUNCTION</scope>
    <scope>CATALYTIC ACTIVITY</scope>
    <scope>BIOPHYSICOCHEMICAL PROPERTIES</scope>
    <scope>MUTAGENESIS OF SER-73; PHE-96 AND LEU-167</scope>
</reference>
<protein>
    <recommendedName>
        <fullName evidence="10">Triosephosphate isomerase</fullName>
        <shortName evidence="9">PfTIM</shortName>
        <ecNumber evidence="6 7 8">5.3.1.1</ecNumber>
    </recommendedName>
    <alternativeName>
        <fullName>Triose-phosphate isomerase</fullName>
    </alternativeName>
</protein>
<evidence type="ECO:0000255" key="1">
    <source>
        <dbReference type="PROSITE-ProRule" id="PRU10127"/>
    </source>
</evidence>
<evidence type="ECO:0000269" key="2">
    <source>
    </source>
</evidence>
<evidence type="ECO:0000269" key="3">
    <source>
    </source>
</evidence>
<evidence type="ECO:0000269" key="4">
    <source>
    </source>
</evidence>
<evidence type="ECO:0000269" key="5">
    <source>
    </source>
</evidence>
<evidence type="ECO:0000269" key="6">
    <source>
    </source>
</evidence>
<evidence type="ECO:0000269" key="7">
    <source>
    </source>
</evidence>
<evidence type="ECO:0000269" key="8">
    <source>
    </source>
</evidence>
<evidence type="ECO:0000303" key="9">
    <source>
    </source>
</evidence>
<evidence type="ECO:0000303" key="10">
    <source>
    </source>
</evidence>
<evidence type="ECO:0000305" key="11"/>
<evidence type="ECO:0000305" key="12">
    <source>
    </source>
</evidence>
<evidence type="ECO:0000312" key="13">
    <source>
        <dbReference type="PDB" id="1LZO"/>
    </source>
</evidence>
<evidence type="ECO:0007744" key="14">
    <source>
        <dbReference type="PDB" id="1LYX"/>
    </source>
</evidence>
<evidence type="ECO:0007744" key="15">
    <source>
        <dbReference type="PDB" id="1LZO"/>
    </source>
</evidence>
<evidence type="ECO:0007744" key="16">
    <source>
        <dbReference type="PDB" id="1M7O"/>
    </source>
</evidence>
<evidence type="ECO:0007744" key="17">
    <source>
        <dbReference type="PDB" id="1M7P"/>
    </source>
</evidence>
<evidence type="ECO:0007744" key="18">
    <source>
        <dbReference type="PDB" id="1O5X"/>
    </source>
</evidence>
<evidence type="ECO:0007744" key="19">
    <source>
        <dbReference type="PDB" id="1VGA"/>
    </source>
</evidence>
<evidence type="ECO:0007744" key="20">
    <source>
        <dbReference type="PDB" id="1WOA"/>
    </source>
</evidence>
<evidence type="ECO:0007744" key="21">
    <source>
        <dbReference type="PDB" id="1WOB"/>
    </source>
</evidence>
<evidence type="ECO:0007744" key="22">
    <source>
        <dbReference type="PDB" id="1YDV"/>
    </source>
</evidence>
<evidence type="ECO:0007744" key="23">
    <source>
        <dbReference type="PDB" id="2VFD"/>
    </source>
</evidence>
<evidence type="ECO:0007744" key="24">
    <source>
        <dbReference type="PDB" id="2VFE"/>
    </source>
</evidence>
<evidence type="ECO:0007744" key="25">
    <source>
        <dbReference type="PDB" id="2VFF"/>
    </source>
</evidence>
<evidence type="ECO:0007744" key="26">
    <source>
        <dbReference type="PDB" id="2VFG"/>
    </source>
</evidence>
<evidence type="ECO:0007744" key="27">
    <source>
        <dbReference type="PDB" id="2VFH"/>
    </source>
</evidence>
<evidence type="ECO:0007744" key="28">
    <source>
        <dbReference type="PDB" id="2VFI"/>
    </source>
</evidence>
<evidence type="ECO:0007744" key="29">
    <source>
        <dbReference type="PDB" id="4YWI"/>
    </source>
</evidence>
<evidence type="ECO:0007744" key="30">
    <source>
        <dbReference type="PDB" id="4YXG"/>
    </source>
</evidence>
<evidence type="ECO:0007744" key="31">
    <source>
        <dbReference type="PDB" id="4Z0J"/>
    </source>
</evidence>
<evidence type="ECO:0007744" key="32">
    <source>
        <dbReference type="PDB" id="4Z0S"/>
    </source>
</evidence>
<evidence type="ECO:0007829" key="33">
    <source>
        <dbReference type="PDB" id="1O5X"/>
    </source>
</evidence>
<dbReference type="EC" id="5.3.1.1" evidence="6 7 8"/>
<dbReference type="EMBL" id="L01654">
    <property type="protein sequence ID" value="AAA18799.1"/>
    <property type="molecule type" value="mRNA"/>
</dbReference>
<dbReference type="PDB" id="1LYX">
    <property type="method" value="X-ray"/>
    <property type="resolution" value="1.90 A"/>
    <property type="chains" value="A=1-248"/>
</dbReference>
<dbReference type="PDB" id="1LZO">
    <property type="method" value="X-ray"/>
    <property type="resolution" value="2.80 A"/>
    <property type="chains" value="A/B/C/D=1-248"/>
</dbReference>
<dbReference type="PDB" id="1M7O">
    <property type="method" value="X-ray"/>
    <property type="resolution" value="2.40 A"/>
    <property type="chains" value="A/B=1-248"/>
</dbReference>
<dbReference type="PDB" id="1M7P">
    <property type="method" value="X-ray"/>
    <property type="resolution" value="2.40 A"/>
    <property type="chains" value="A/B=1-248"/>
</dbReference>
<dbReference type="PDB" id="1O5X">
    <property type="method" value="X-ray"/>
    <property type="resolution" value="1.10 A"/>
    <property type="chains" value="A/B=1-248"/>
</dbReference>
<dbReference type="PDB" id="1VGA">
    <property type="method" value="X-ray"/>
    <property type="resolution" value="1.80 A"/>
    <property type="chains" value="A/B/C/D=1-248"/>
</dbReference>
<dbReference type="PDB" id="1WOA">
    <property type="method" value="X-ray"/>
    <property type="resolution" value="2.80 A"/>
    <property type="chains" value="A/B/C/D=1-248"/>
</dbReference>
<dbReference type="PDB" id="1WOB">
    <property type="method" value="X-ray"/>
    <property type="resolution" value="2.80 A"/>
    <property type="chains" value="A/B/C/D=1-248"/>
</dbReference>
<dbReference type="PDB" id="1YDV">
    <property type="method" value="X-ray"/>
    <property type="resolution" value="2.20 A"/>
    <property type="chains" value="A/B=1-248"/>
</dbReference>
<dbReference type="PDB" id="2VFD">
    <property type="method" value="X-ray"/>
    <property type="resolution" value="1.40 A"/>
    <property type="chains" value="A/B=1-248"/>
</dbReference>
<dbReference type="PDB" id="2VFE">
    <property type="method" value="X-ray"/>
    <property type="resolution" value="2.20 A"/>
    <property type="chains" value="A/B=1-248"/>
</dbReference>
<dbReference type="PDB" id="2VFF">
    <property type="method" value="X-ray"/>
    <property type="resolution" value="1.70 A"/>
    <property type="chains" value="A/B=1-248"/>
</dbReference>
<dbReference type="PDB" id="2VFG">
    <property type="method" value="X-ray"/>
    <property type="resolution" value="1.95 A"/>
    <property type="chains" value="A/B/C/D=1-248"/>
</dbReference>
<dbReference type="PDB" id="2VFH">
    <property type="method" value="X-ray"/>
    <property type="resolution" value="2.00 A"/>
    <property type="chains" value="A/B=1-248"/>
</dbReference>
<dbReference type="PDB" id="2VFI">
    <property type="method" value="X-ray"/>
    <property type="resolution" value="2.25 A"/>
    <property type="chains" value="A/B=1-248"/>
</dbReference>
<dbReference type="PDB" id="3PSV">
    <property type="method" value="X-ray"/>
    <property type="resolution" value="2.00 A"/>
    <property type="chains" value="A/B=1-248"/>
</dbReference>
<dbReference type="PDB" id="3PSW">
    <property type="method" value="X-ray"/>
    <property type="resolution" value="1.99 A"/>
    <property type="chains" value="A/B=1-248"/>
</dbReference>
<dbReference type="PDB" id="3PVF">
    <property type="method" value="X-ray"/>
    <property type="resolution" value="1.73 A"/>
    <property type="chains" value="A=1-248"/>
</dbReference>
<dbReference type="PDB" id="3PWA">
    <property type="method" value="X-ray"/>
    <property type="resolution" value="2.04 A"/>
    <property type="chains" value="A/B=1-248"/>
</dbReference>
<dbReference type="PDB" id="3PY2">
    <property type="method" value="X-ray"/>
    <property type="resolution" value="1.93 A"/>
    <property type="chains" value="A/B=1-248"/>
</dbReference>
<dbReference type="PDB" id="4YWI">
    <property type="method" value="X-ray"/>
    <property type="resolution" value="1.85 A"/>
    <property type="chains" value="A/B=1-248"/>
</dbReference>
<dbReference type="PDB" id="4YXG">
    <property type="method" value="X-ray"/>
    <property type="resolution" value="1.90 A"/>
    <property type="chains" value="A/B=1-248"/>
</dbReference>
<dbReference type="PDB" id="4Z0J">
    <property type="method" value="X-ray"/>
    <property type="resolution" value="2.07 A"/>
    <property type="chains" value="A/B=1-248"/>
</dbReference>
<dbReference type="PDB" id="4Z0S">
    <property type="method" value="X-ray"/>
    <property type="resolution" value="2.39 A"/>
    <property type="chains" value="A/B=1-248"/>
</dbReference>
<dbReference type="PDB" id="4ZZ9">
    <property type="method" value="X-ray"/>
    <property type="resolution" value="1.81 A"/>
    <property type="chains" value="A/B=1-248"/>
</dbReference>
<dbReference type="PDB" id="5BMW">
    <property type="method" value="X-ray"/>
    <property type="resolution" value="1.86 A"/>
    <property type="chains" value="A/B=1-248"/>
</dbReference>
<dbReference type="PDB" id="5BMX">
    <property type="method" value="X-ray"/>
    <property type="resolution" value="1.80 A"/>
    <property type="chains" value="A/B/C/D=1-248"/>
</dbReference>
<dbReference type="PDB" id="5BNK">
    <property type="method" value="X-ray"/>
    <property type="resolution" value="1.80 A"/>
    <property type="chains" value="A/B=1-248"/>
</dbReference>
<dbReference type="PDB" id="5BRB">
    <property type="method" value="X-ray"/>
    <property type="resolution" value="2.53 A"/>
    <property type="chains" value="A/B=1-248"/>
</dbReference>
<dbReference type="PDB" id="5GV4">
    <property type="method" value="X-ray"/>
    <property type="resolution" value="2.09 A"/>
    <property type="chains" value="A=1-248"/>
</dbReference>
<dbReference type="PDB" id="5GZP">
    <property type="method" value="X-ray"/>
    <property type="resolution" value="2.03 A"/>
    <property type="chains" value="A/B=1-248"/>
</dbReference>
<dbReference type="PDBsum" id="1LYX"/>
<dbReference type="PDBsum" id="1LZO"/>
<dbReference type="PDBsum" id="1M7O"/>
<dbReference type="PDBsum" id="1M7P"/>
<dbReference type="PDBsum" id="1O5X"/>
<dbReference type="PDBsum" id="1VGA"/>
<dbReference type="PDBsum" id="1WOA"/>
<dbReference type="PDBsum" id="1WOB"/>
<dbReference type="PDBsum" id="1YDV"/>
<dbReference type="PDBsum" id="2VFD"/>
<dbReference type="PDBsum" id="2VFE"/>
<dbReference type="PDBsum" id="2VFF"/>
<dbReference type="PDBsum" id="2VFG"/>
<dbReference type="PDBsum" id="2VFH"/>
<dbReference type="PDBsum" id="2VFI"/>
<dbReference type="PDBsum" id="3PSV"/>
<dbReference type="PDBsum" id="3PSW"/>
<dbReference type="PDBsum" id="3PVF"/>
<dbReference type="PDBsum" id="3PWA"/>
<dbReference type="PDBsum" id="3PY2"/>
<dbReference type="PDBsum" id="4YWI"/>
<dbReference type="PDBsum" id="4YXG"/>
<dbReference type="PDBsum" id="4Z0J"/>
<dbReference type="PDBsum" id="4Z0S"/>
<dbReference type="PDBsum" id="4ZZ9"/>
<dbReference type="PDBsum" id="5BMW"/>
<dbReference type="PDBsum" id="5BMX"/>
<dbReference type="PDBsum" id="5BNK"/>
<dbReference type="PDBsum" id="5BRB"/>
<dbReference type="PDBsum" id="5GV4"/>
<dbReference type="PDBsum" id="5GZP"/>
<dbReference type="SMR" id="Q07412"/>
<dbReference type="MINT" id="Q07412"/>
<dbReference type="DrugBank" id="DB01709">
    <property type="generic name" value="2-phospho-D-glyceric acid"/>
</dbReference>
<dbReference type="DrugBank" id="DB02726">
    <property type="generic name" value="2-Phosphoglycolic Acid"/>
</dbReference>
<dbReference type="DrugBank" id="DB02951">
    <property type="generic name" value="3-Hydroxypyruvic Acid"/>
</dbReference>
<dbReference type="DrugBank" id="DB04510">
    <property type="generic name" value="3-phospho-D-glyceric acid"/>
</dbReference>
<dbReference type="DrugBank" id="DB01779">
    <property type="generic name" value="Glycerol 2-phosphate"/>
</dbReference>
<dbReference type="DrugBank" id="DB02515">
    <property type="generic name" value="sn-glycerol 3-phosphate"/>
</dbReference>
<dbReference type="EnsemblProtists" id="CZU00095">
    <property type="protein sequence ID" value="CZU00095"/>
    <property type="gene ID" value="PF3D7_1439900"/>
</dbReference>
<dbReference type="VEuPathDB" id="PlasmoDB:PF3D7_1439900"/>
<dbReference type="VEuPathDB" id="PlasmoDB:Pf7G8-2_000513700"/>
<dbReference type="VEuPathDB" id="PlasmoDB:Pf7G8_140045200"/>
<dbReference type="VEuPathDB" id="PlasmoDB:PfCD01_140045400"/>
<dbReference type="VEuPathDB" id="PlasmoDB:PfDd2_140044400"/>
<dbReference type="VEuPathDB" id="PlasmoDB:PfGA01_140045500"/>
<dbReference type="VEuPathDB" id="PlasmoDB:PfGB4_140046100"/>
<dbReference type="VEuPathDB" id="PlasmoDB:PfGN01_140045300"/>
<dbReference type="VEuPathDB" id="PlasmoDB:PfHB3_140045700"/>
<dbReference type="VEuPathDB" id="PlasmoDB:PfIT_140046400"/>
<dbReference type="VEuPathDB" id="PlasmoDB:PfKE01_140044900"/>
<dbReference type="VEuPathDB" id="PlasmoDB:PfKH01_140045500"/>
<dbReference type="VEuPathDB" id="PlasmoDB:PfKH02_140045700"/>
<dbReference type="VEuPathDB" id="PlasmoDB:PfML01_140045500"/>
<dbReference type="VEuPathDB" id="PlasmoDB:PfNF135_140044100"/>
<dbReference type="VEuPathDB" id="PlasmoDB:PfNF166_140042800"/>
<dbReference type="VEuPathDB" id="PlasmoDB:PfNF54_140043700"/>
<dbReference type="VEuPathDB" id="PlasmoDB:PfSD01_140043300"/>
<dbReference type="VEuPathDB" id="PlasmoDB:PfSN01_140047200"/>
<dbReference type="VEuPathDB" id="PlasmoDB:PfTG01_140045300"/>
<dbReference type="OMA" id="NWKMHMT"/>
<dbReference type="BRENDA" id="5.3.1.1">
    <property type="organism ID" value="4889"/>
</dbReference>
<dbReference type="SABIO-RK" id="Q07412"/>
<dbReference type="UniPathway" id="UPA00109">
    <property type="reaction ID" value="UER00189"/>
</dbReference>
<dbReference type="UniPathway" id="UPA00138"/>
<dbReference type="EvolutionaryTrace" id="Q07412"/>
<dbReference type="GO" id="GO:0005829">
    <property type="term" value="C:cytosol"/>
    <property type="evidence" value="ECO:0007669"/>
    <property type="project" value="TreeGrafter"/>
</dbReference>
<dbReference type="GO" id="GO:0042802">
    <property type="term" value="F:identical protein binding"/>
    <property type="evidence" value="ECO:0000353"/>
    <property type="project" value="IntAct"/>
</dbReference>
<dbReference type="GO" id="GO:0004807">
    <property type="term" value="F:triose-phosphate isomerase activity"/>
    <property type="evidence" value="ECO:0000314"/>
    <property type="project" value="CACAO"/>
</dbReference>
<dbReference type="GO" id="GO:0006094">
    <property type="term" value="P:gluconeogenesis"/>
    <property type="evidence" value="ECO:0007669"/>
    <property type="project" value="UniProtKB-UniPathway"/>
</dbReference>
<dbReference type="GO" id="GO:0046166">
    <property type="term" value="P:glyceraldehyde-3-phosphate biosynthetic process"/>
    <property type="evidence" value="ECO:0007669"/>
    <property type="project" value="TreeGrafter"/>
</dbReference>
<dbReference type="GO" id="GO:0019563">
    <property type="term" value="P:glycerol catabolic process"/>
    <property type="evidence" value="ECO:0007669"/>
    <property type="project" value="TreeGrafter"/>
</dbReference>
<dbReference type="GO" id="GO:0006096">
    <property type="term" value="P:glycolytic process"/>
    <property type="evidence" value="ECO:0007669"/>
    <property type="project" value="UniProtKB-UniPathway"/>
</dbReference>
<dbReference type="CDD" id="cd00311">
    <property type="entry name" value="TIM"/>
    <property type="match status" value="1"/>
</dbReference>
<dbReference type="DisProt" id="DP00614"/>
<dbReference type="FunFam" id="3.20.20.70:FF:000016">
    <property type="entry name" value="Triosephosphate isomerase"/>
    <property type="match status" value="1"/>
</dbReference>
<dbReference type="Gene3D" id="3.20.20.70">
    <property type="entry name" value="Aldolase class I"/>
    <property type="match status" value="1"/>
</dbReference>
<dbReference type="HAMAP" id="MF_00147_B">
    <property type="entry name" value="TIM_B"/>
    <property type="match status" value="1"/>
</dbReference>
<dbReference type="InterPro" id="IPR013785">
    <property type="entry name" value="Aldolase_TIM"/>
</dbReference>
<dbReference type="InterPro" id="IPR035990">
    <property type="entry name" value="TIM_sf"/>
</dbReference>
<dbReference type="InterPro" id="IPR022896">
    <property type="entry name" value="TrioseP_Isoase_bac/euk"/>
</dbReference>
<dbReference type="InterPro" id="IPR000652">
    <property type="entry name" value="Triosephosphate_isomerase"/>
</dbReference>
<dbReference type="InterPro" id="IPR020861">
    <property type="entry name" value="Triosephosphate_isomerase_AS"/>
</dbReference>
<dbReference type="NCBIfam" id="TIGR00419">
    <property type="entry name" value="tim"/>
    <property type="match status" value="1"/>
</dbReference>
<dbReference type="PANTHER" id="PTHR21139">
    <property type="entry name" value="TRIOSEPHOSPHATE ISOMERASE"/>
    <property type="match status" value="1"/>
</dbReference>
<dbReference type="PANTHER" id="PTHR21139:SF2">
    <property type="entry name" value="TRIOSEPHOSPHATE ISOMERASE"/>
    <property type="match status" value="1"/>
</dbReference>
<dbReference type="Pfam" id="PF00121">
    <property type="entry name" value="TIM"/>
    <property type="match status" value="1"/>
</dbReference>
<dbReference type="SUPFAM" id="SSF51351">
    <property type="entry name" value="Triosephosphate isomerase (TIM)"/>
    <property type="match status" value="1"/>
</dbReference>
<dbReference type="PROSITE" id="PS00171">
    <property type="entry name" value="TIM_1"/>
    <property type="match status" value="1"/>
</dbReference>
<dbReference type="PROSITE" id="PS51440">
    <property type="entry name" value="TIM_2"/>
    <property type="match status" value="1"/>
</dbReference>
<accession>Q07412</accession>
<keyword id="KW-0002">3D-structure</keyword>
<keyword id="KW-0312">Gluconeogenesis</keyword>
<keyword id="KW-0324">Glycolysis</keyword>
<keyword id="KW-0413">Isomerase</keyword>
<proteinExistence type="evidence at protein level"/>
<sequence>MARKYFVAANWKCNGTLESIKSLTNSFNNLDFDPSKLDVVVFPVSVHYDHTRKLLQSKFSTGIQNVSKFGNGSYTGEVSAEIAKDLNIEYVIIGHFERRKYFHETDEDVREKLQASLKNNLKAVVCFGESLEQREQNKTIEVITKQVKAFVDLIDNFDNVILAYEPLWAIGTGKTATPEQAQLVHKEIRKIVKDTCGEKQANQIRILYGGSVNTENCSSLIQQEDIDGFLVGNASLKESFVDIIKSAM</sequence>